<reference key="1">
    <citation type="journal article" date="2005" name="Science">
        <title>The genome of the basidiomycetous yeast and human pathogen Cryptococcus neoformans.</title>
        <authorList>
            <person name="Loftus B.J."/>
            <person name="Fung E."/>
            <person name="Roncaglia P."/>
            <person name="Rowley D."/>
            <person name="Amedeo P."/>
            <person name="Bruno D."/>
            <person name="Vamathevan J."/>
            <person name="Miranda M."/>
            <person name="Anderson I.J."/>
            <person name="Fraser J.A."/>
            <person name="Allen J.E."/>
            <person name="Bosdet I.E."/>
            <person name="Brent M.R."/>
            <person name="Chiu R."/>
            <person name="Doering T.L."/>
            <person name="Donlin M.J."/>
            <person name="D'Souza C.A."/>
            <person name="Fox D.S."/>
            <person name="Grinberg V."/>
            <person name="Fu J."/>
            <person name="Fukushima M."/>
            <person name="Haas B.J."/>
            <person name="Huang J.C."/>
            <person name="Janbon G."/>
            <person name="Jones S.J.M."/>
            <person name="Koo H.L."/>
            <person name="Krzywinski M.I."/>
            <person name="Kwon-Chung K.J."/>
            <person name="Lengeler K.B."/>
            <person name="Maiti R."/>
            <person name="Marra M.A."/>
            <person name="Marra R.E."/>
            <person name="Mathewson C.A."/>
            <person name="Mitchell T.G."/>
            <person name="Pertea M."/>
            <person name="Riggs F.R."/>
            <person name="Salzberg S.L."/>
            <person name="Schein J.E."/>
            <person name="Shvartsbeyn A."/>
            <person name="Shin H."/>
            <person name="Shumway M."/>
            <person name="Specht C.A."/>
            <person name="Suh B.B."/>
            <person name="Tenney A."/>
            <person name="Utterback T.R."/>
            <person name="Wickes B.L."/>
            <person name="Wortman J.R."/>
            <person name="Wye N.H."/>
            <person name="Kronstad J.W."/>
            <person name="Lodge J.K."/>
            <person name="Heitman J."/>
            <person name="Davis R.W."/>
            <person name="Fraser C.M."/>
            <person name="Hyman R.W."/>
        </authorList>
    </citation>
    <scope>NUCLEOTIDE SEQUENCE [LARGE SCALE GENOMIC DNA]</scope>
    <source>
        <strain>JEC21 / ATCC MYA-565</strain>
    </source>
</reference>
<keyword id="KW-0963">Cytoplasm</keyword>
<keyword id="KW-0396">Initiation factor</keyword>
<keyword id="KW-0648">Protein biosynthesis</keyword>
<keyword id="KW-1185">Reference proteome</keyword>
<keyword id="KW-0677">Repeat</keyword>
<keyword id="KW-0853">WD repeat</keyword>
<accession>P0CS32</accession>
<accession>Q55ZC3</accession>
<accession>Q5KNN8</accession>
<sequence length="341" mass="38003">MKPIILQGHERSLNQIVFNSEGDLLFSASKDSVVNAWYTSNGERLGTYGGIKGGDGHNGSVWTVAVDSQTRFLLTGGADNAMKLWEVKTGECLYTWEFLTAVKRVAWNEDDDMFLSITEQRSGQPSVIRIFSINREDPRSQSTTPITEMRLSGSRATVAIWAPLSDYIITGHESGKIAKYDVKTGEEVQAVEDEHSALISDIQLSPDGTYFITASKDKTARLWDIETLEVMKVYTTETPVNSAVITPDRPYIILGGGQDAMNVTTTSQRAGKFESRFFHKLFEEEVGRVKGHFGPINTLSVHPQGRAYASGAEDGFVRVHWFEESYFRSRPFGDLEPEPEV</sequence>
<feature type="chain" id="PRO_0000365365" description="Eukaryotic translation initiation factor 3 subunit I">
    <location>
        <begin position="1"/>
        <end position="341"/>
    </location>
</feature>
<feature type="repeat" description="WD 1">
    <location>
        <begin position="8"/>
        <end position="47"/>
    </location>
</feature>
<feature type="repeat" description="WD 2">
    <location>
        <begin position="56"/>
        <end position="95"/>
    </location>
</feature>
<feature type="repeat" description="WD 3">
    <location>
        <begin position="151"/>
        <end position="190"/>
    </location>
</feature>
<feature type="repeat" description="WD 4">
    <location>
        <begin position="194"/>
        <end position="233"/>
    </location>
</feature>
<feature type="repeat" description="WD 5">
    <location>
        <begin position="235"/>
        <end position="274"/>
    </location>
</feature>
<feature type="repeat" description="WD 6">
    <location>
        <begin position="291"/>
        <end position="331"/>
    </location>
</feature>
<comment type="function">
    <text evidence="1">Component of the eukaryotic translation initiation factor 3 (eIF-3) complex, which is involved in protein synthesis of a specialized repertoire of mRNAs and, together with other initiation factors, stimulates binding of mRNA and methionyl-tRNAi to the 40S ribosome. The eIF-3 complex specifically targets and initiates translation of a subset of mRNAs involved in cell proliferation.</text>
</comment>
<comment type="subunit">
    <text evidence="1">Component of the eukaryotic translation initiation factor 3 (eIF-3) complex.</text>
</comment>
<comment type="subcellular location">
    <subcellularLocation>
        <location evidence="1">Cytoplasm</location>
    </subcellularLocation>
</comment>
<comment type="similarity">
    <text evidence="1">Belongs to the eIF-3 subunit I family.</text>
</comment>
<protein>
    <recommendedName>
        <fullName evidence="1">Eukaryotic translation initiation factor 3 subunit I</fullName>
        <shortName evidence="1">eIF3i</shortName>
    </recommendedName>
    <alternativeName>
        <fullName evidence="1">Eukaryotic translation initiation factor 3 39 kDa subunit homolog</fullName>
        <shortName evidence="1">eIF-3 39 kDa subunit homolog</shortName>
    </alternativeName>
</protein>
<organism>
    <name type="scientific">Cryptococcus neoformans var. neoformans serotype D (strain JEC21 / ATCC MYA-565)</name>
    <name type="common">Filobasidiella neoformans</name>
    <dbReference type="NCBI Taxonomy" id="214684"/>
    <lineage>
        <taxon>Eukaryota</taxon>
        <taxon>Fungi</taxon>
        <taxon>Dikarya</taxon>
        <taxon>Basidiomycota</taxon>
        <taxon>Agaricomycotina</taxon>
        <taxon>Tremellomycetes</taxon>
        <taxon>Tremellales</taxon>
        <taxon>Cryptococcaceae</taxon>
        <taxon>Cryptococcus</taxon>
        <taxon>Cryptococcus neoformans species complex</taxon>
    </lineage>
</organism>
<proteinExistence type="inferred from homology"/>
<gene>
    <name evidence="1" type="primary">TIF34</name>
    <name type="ordered locus">CNA05850</name>
</gene>
<evidence type="ECO:0000255" key="1">
    <source>
        <dbReference type="HAMAP-Rule" id="MF_03008"/>
    </source>
</evidence>
<name>EIF3I_CRYNJ</name>
<dbReference type="EMBL" id="AE017341">
    <property type="protein sequence ID" value="AAW41436.1"/>
    <property type="molecule type" value="Genomic_DNA"/>
</dbReference>
<dbReference type="RefSeq" id="XP_567255.1">
    <property type="nucleotide sequence ID" value="XM_567255.1"/>
</dbReference>
<dbReference type="SMR" id="P0CS32"/>
<dbReference type="FunCoup" id="P0CS32">
    <property type="interactions" value="524"/>
</dbReference>
<dbReference type="STRING" id="214684.P0CS32"/>
<dbReference type="PaxDb" id="214684-P0CS32"/>
<dbReference type="EnsemblFungi" id="AAW41436">
    <property type="protein sequence ID" value="AAW41436"/>
    <property type="gene ID" value="CNA05850"/>
</dbReference>
<dbReference type="GeneID" id="3253667"/>
<dbReference type="KEGG" id="cne:CNA05850"/>
<dbReference type="VEuPathDB" id="FungiDB:CNA05850"/>
<dbReference type="eggNOG" id="KOG0643">
    <property type="taxonomic scope" value="Eukaryota"/>
</dbReference>
<dbReference type="HOGENOM" id="CLU_043845_0_1_1"/>
<dbReference type="InParanoid" id="P0CS32"/>
<dbReference type="OMA" id="VWFSHNG"/>
<dbReference type="OrthoDB" id="24966at2759"/>
<dbReference type="Proteomes" id="UP000002149">
    <property type="component" value="Chromosome 1"/>
</dbReference>
<dbReference type="GO" id="GO:0016282">
    <property type="term" value="C:eukaryotic 43S preinitiation complex"/>
    <property type="evidence" value="ECO:0007669"/>
    <property type="project" value="UniProtKB-UniRule"/>
</dbReference>
<dbReference type="GO" id="GO:0033290">
    <property type="term" value="C:eukaryotic 48S preinitiation complex"/>
    <property type="evidence" value="ECO:0007669"/>
    <property type="project" value="UniProtKB-UniRule"/>
</dbReference>
<dbReference type="GO" id="GO:0071540">
    <property type="term" value="C:eukaryotic translation initiation factor 3 complex, eIF3e"/>
    <property type="evidence" value="ECO:0007669"/>
    <property type="project" value="EnsemblFungi"/>
</dbReference>
<dbReference type="GO" id="GO:0071541">
    <property type="term" value="C:eukaryotic translation initiation factor 3 complex, eIF3m"/>
    <property type="evidence" value="ECO:0000318"/>
    <property type="project" value="GO_Central"/>
</dbReference>
<dbReference type="GO" id="GO:0034399">
    <property type="term" value="C:nuclear periphery"/>
    <property type="evidence" value="ECO:0007669"/>
    <property type="project" value="EnsemblFungi"/>
</dbReference>
<dbReference type="GO" id="GO:0003723">
    <property type="term" value="F:RNA binding"/>
    <property type="evidence" value="ECO:0000318"/>
    <property type="project" value="GO_Central"/>
</dbReference>
<dbReference type="GO" id="GO:0003743">
    <property type="term" value="F:translation initiation factor activity"/>
    <property type="evidence" value="ECO:0000318"/>
    <property type="project" value="GO_Central"/>
</dbReference>
<dbReference type="GO" id="GO:0002183">
    <property type="term" value="P:cytoplasmic translational initiation"/>
    <property type="evidence" value="ECO:0000318"/>
    <property type="project" value="GO_Central"/>
</dbReference>
<dbReference type="GO" id="GO:0001732">
    <property type="term" value="P:formation of cytoplasmic translation initiation complex"/>
    <property type="evidence" value="ECO:0007669"/>
    <property type="project" value="UniProtKB-UniRule"/>
</dbReference>
<dbReference type="CDD" id="cd00200">
    <property type="entry name" value="WD40"/>
    <property type="match status" value="1"/>
</dbReference>
<dbReference type="Gene3D" id="2.130.10.10">
    <property type="entry name" value="YVTN repeat-like/Quinoprotein amine dehydrogenase"/>
    <property type="match status" value="1"/>
</dbReference>
<dbReference type="HAMAP" id="MF_03008">
    <property type="entry name" value="eIF3i"/>
    <property type="match status" value="1"/>
</dbReference>
<dbReference type="InterPro" id="IPR027525">
    <property type="entry name" value="eIF3i"/>
</dbReference>
<dbReference type="InterPro" id="IPR020472">
    <property type="entry name" value="G-protein_beta_WD-40_rep"/>
</dbReference>
<dbReference type="InterPro" id="IPR015943">
    <property type="entry name" value="WD40/YVTN_repeat-like_dom_sf"/>
</dbReference>
<dbReference type="InterPro" id="IPR019775">
    <property type="entry name" value="WD40_repeat_CS"/>
</dbReference>
<dbReference type="InterPro" id="IPR036322">
    <property type="entry name" value="WD40_repeat_dom_sf"/>
</dbReference>
<dbReference type="InterPro" id="IPR001680">
    <property type="entry name" value="WD40_rpt"/>
</dbReference>
<dbReference type="PANTHER" id="PTHR19877">
    <property type="entry name" value="EUKARYOTIC TRANSLATION INITIATION FACTOR 3 SUBUNIT I"/>
    <property type="match status" value="1"/>
</dbReference>
<dbReference type="PANTHER" id="PTHR19877:SF1">
    <property type="entry name" value="EUKARYOTIC TRANSLATION INITIATION FACTOR 3 SUBUNIT I"/>
    <property type="match status" value="1"/>
</dbReference>
<dbReference type="Pfam" id="PF24805">
    <property type="entry name" value="EIF3I"/>
    <property type="match status" value="1"/>
</dbReference>
<dbReference type="PRINTS" id="PR00320">
    <property type="entry name" value="GPROTEINBRPT"/>
</dbReference>
<dbReference type="SMART" id="SM00320">
    <property type="entry name" value="WD40"/>
    <property type="match status" value="7"/>
</dbReference>
<dbReference type="SUPFAM" id="SSF50978">
    <property type="entry name" value="WD40 repeat-like"/>
    <property type="match status" value="1"/>
</dbReference>
<dbReference type="PROSITE" id="PS00678">
    <property type="entry name" value="WD_REPEATS_1"/>
    <property type="match status" value="1"/>
</dbReference>
<dbReference type="PROSITE" id="PS50082">
    <property type="entry name" value="WD_REPEATS_2"/>
    <property type="match status" value="4"/>
</dbReference>
<dbReference type="PROSITE" id="PS50294">
    <property type="entry name" value="WD_REPEATS_REGION"/>
    <property type="match status" value="1"/>
</dbReference>